<accession>Q6LZG2</accession>
<proteinExistence type="inferred from homology"/>
<feature type="chain" id="PRO_0000352062" description="Small ribosomal subunit protein uS2">
    <location>
        <begin position="1"/>
        <end position="220"/>
    </location>
</feature>
<evidence type="ECO:0000255" key="1">
    <source>
        <dbReference type="HAMAP-Rule" id="MF_00291"/>
    </source>
</evidence>
<evidence type="ECO:0000305" key="2"/>
<organism>
    <name type="scientific">Methanococcus maripaludis (strain DSM 14266 / JCM 13030 / NBRC 101832 / S2 / LL)</name>
    <dbReference type="NCBI Taxonomy" id="267377"/>
    <lineage>
        <taxon>Archaea</taxon>
        <taxon>Methanobacteriati</taxon>
        <taxon>Methanobacteriota</taxon>
        <taxon>Methanomada group</taxon>
        <taxon>Methanococci</taxon>
        <taxon>Methanococcales</taxon>
        <taxon>Methanococcaceae</taxon>
        <taxon>Methanococcus</taxon>
    </lineage>
</organism>
<comment type="similarity">
    <text evidence="1">Belongs to the universal ribosomal protein uS2 family.</text>
</comment>
<sequence length="220" mass="25262">MSDENLLTTLDTYLASGIHIGTQQKTEDMRRFIYRVRADGLYVLDVRKTDERLRLAAKFLSNYEPEDIMAVTRRVYSVGPLKEFGKVTGINTVAGRFVPGTLTNPSARKFAEPEVLFLSDPRVDKQALKEAIEIGIPVIGMCDTEHLTAHIDFIIPTNNKGRKSVSLMYYLIAREYMKNRGLIGEEAPFSYDQFLEKAMNVKVKMNPSNRQRGRFHRRRR</sequence>
<keyword id="KW-1185">Reference proteome</keyword>
<keyword id="KW-0687">Ribonucleoprotein</keyword>
<keyword id="KW-0689">Ribosomal protein</keyword>
<dbReference type="EMBL" id="BX950229">
    <property type="protein sequence ID" value="CAF30223.1"/>
    <property type="molecule type" value="Genomic_DNA"/>
</dbReference>
<dbReference type="SMR" id="Q6LZG2"/>
<dbReference type="STRING" id="267377.MMP0667"/>
<dbReference type="EnsemblBacteria" id="CAF30223">
    <property type="protein sequence ID" value="CAF30223"/>
    <property type="gene ID" value="MMP0667"/>
</dbReference>
<dbReference type="KEGG" id="mmp:MMP0667"/>
<dbReference type="PATRIC" id="fig|267377.15.peg.684"/>
<dbReference type="eggNOG" id="arCOG04245">
    <property type="taxonomic scope" value="Archaea"/>
</dbReference>
<dbReference type="HOGENOM" id="CLU_058171_3_0_2"/>
<dbReference type="OrthoDB" id="371797at2157"/>
<dbReference type="Proteomes" id="UP000000590">
    <property type="component" value="Chromosome"/>
</dbReference>
<dbReference type="GO" id="GO:0015935">
    <property type="term" value="C:small ribosomal subunit"/>
    <property type="evidence" value="ECO:0007669"/>
    <property type="project" value="InterPro"/>
</dbReference>
<dbReference type="GO" id="GO:0003735">
    <property type="term" value="F:structural constituent of ribosome"/>
    <property type="evidence" value="ECO:0007669"/>
    <property type="project" value="InterPro"/>
</dbReference>
<dbReference type="GO" id="GO:0006412">
    <property type="term" value="P:translation"/>
    <property type="evidence" value="ECO:0007669"/>
    <property type="project" value="UniProtKB-UniRule"/>
</dbReference>
<dbReference type="CDD" id="cd01425">
    <property type="entry name" value="RPS2"/>
    <property type="match status" value="1"/>
</dbReference>
<dbReference type="FunFam" id="3.40.50.10490:FF:000030">
    <property type="entry name" value="30S ribosomal protein S2"/>
    <property type="match status" value="1"/>
</dbReference>
<dbReference type="Gene3D" id="3.40.50.10490">
    <property type="entry name" value="Glucose-6-phosphate isomerase like protein, domain 1"/>
    <property type="match status" value="1"/>
</dbReference>
<dbReference type="HAMAP" id="MF_00291_A">
    <property type="entry name" value="Ribosomal_uS2_A"/>
    <property type="match status" value="1"/>
</dbReference>
<dbReference type="InterPro" id="IPR001865">
    <property type="entry name" value="Ribosomal_uS2"/>
</dbReference>
<dbReference type="InterPro" id="IPR023454">
    <property type="entry name" value="Ribosomal_uS2_arc"/>
</dbReference>
<dbReference type="InterPro" id="IPR018130">
    <property type="entry name" value="Ribosomal_uS2_CS"/>
</dbReference>
<dbReference type="InterPro" id="IPR005707">
    <property type="entry name" value="Ribosomal_uS2_euk/arc"/>
</dbReference>
<dbReference type="InterPro" id="IPR023591">
    <property type="entry name" value="Ribosomal_uS2_flav_dom_sf"/>
</dbReference>
<dbReference type="NCBIfam" id="TIGR01012">
    <property type="entry name" value="uS2_euk_arch"/>
    <property type="match status" value="1"/>
</dbReference>
<dbReference type="PANTHER" id="PTHR11489">
    <property type="entry name" value="40S RIBOSOMAL PROTEIN SA"/>
    <property type="match status" value="1"/>
</dbReference>
<dbReference type="Pfam" id="PF00318">
    <property type="entry name" value="Ribosomal_S2"/>
    <property type="match status" value="2"/>
</dbReference>
<dbReference type="PRINTS" id="PR00395">
    <property type="entry name" value="RIBOSOMALS2"/>
</dbReference>
<dbReference type="SUPFAM" id="SSF52313">
    <property type="entry name" value="Ribosomal protein S2"/>
    <property type="match status" value="1"/>
</dbReference>
<dbReference type="PROSITE" id="PS00963">
    <property type="entry name" value="RIBOSOMAL_S2_2"/>
    <property type="match status" value="1"/>
</dbReference>
<reference key="1">
    <citation type="journal article" date="2004" name="J. Bacteriol.">
        <title>Complete genome sequence of the genetically tractable hydrogenotrophic methanogen Methanococcus maripaludis.</title>
        <authorList>
            <person name="Hendrickson E.L."/>
            <person name="Kaul R."/>
            <person name="Zhou Y."/>
            <person name="Bovee D."/>
            <person name="Chapman P."/>
            <person name="Chung J."/>
            <person name="Conway de Macario E."/>
            <person name="Dodsworth J.A."/>
            <person name="Gillett W."/>
            <person name="Graham D.E."/>
            <person name="Hackett M."/>
            <person name="Haydock A.K."/>
            <person name="Kang A."/>
            <person name="Land M.L."/>
            <person name="Levy R."/>
            <person name="Lie T.J."/>
            <person name="Major T.A."/>
            <person name="Moore B.C."/>
            <person name="Porat I."/>
            <person name="Palmeiri A."/>
            <person name="Rouse G."/>
            <person name="Saenphimmachak C."/>
            <person name="Soell D."/>
            <person name="Van Dien S."/>
            <person name="Wang T."/>
            <person name="Whitman W.B."/>
            <person name="Xia Q."/>
            <person name="Zhang Y."/>
            <person name="Larimer F.W."/>
            <person name="Olson M.V."/>
            <person name="Leigh J.A."/>
        </authorList>
    </citation>
    <scope>NUCLEOTIDE SEQUENCE [LARGE SCALE GENOMIC DNA]</scope>
    <source>
        <strain>DSM 14266 / JCM 13030 / NBRC 101832 / S2 / LL</strain>
    </source>
</reference>
<gene>
    <name evidence="1" type="primary">rps2</name>
    <name type="ordered locus">MMP0667</name>
</gene>
<protein>
    <recommendedName>
        <fullName evidence="1">Small ribosomal subunit protein uS2</fullName>
    </recommendedName>
    <alternativeName>
        <fullName evidence="2">30S ribosomal protein S2</fullName>
    </alternativeName>
</protein>
<name>RS2_METMP</name>